<feature type="chain" id="PRO_1000008348" description="Translation initiation factor IF-2">
    <location>
        <begin position="1"/>
        <end position="930"/>
    </location>
</feature>
<feature type="domain" description="tr-type G">
    <location>
        <begin position="432"/>
        <end position="599"/>
    </location>
</feature>
<feature type="region of interest" description="Disordered" evidence="3">
    <location>
        <begin position="50"/>
        <end position="195"/>
    </location>
</feature>
<feature type="region of interest" description="Disordered" evidence="3">
    <location>
        <begin position="260"/>
        <end position="346"/>
    </location>
</feature>
<feature type="region of interest" description="G1" evidence="1">
    <location>
        <begin position="441"/>
        <end position="448"/>
    </location>
</feature>
<feature type="region of interest" description="G2" evidence="1">
    <location>
        <begin position="466"/>
        <end position="470"/>
    </location>
</feature>
<feature type="region of interest" description="G3" evidence="1">
    <location>
        <begin position="487"/>
        <end position="490"/>
    </location>
</feature>
<feature type="region of interest" description="G4" evidence="1">
    <location>
        <begin position="541"/>
        <end position="544"/>
    </location>
</feature>
<feature type="region of interest" description="G5" evidence="1">
    <location>
        <begin position="577"/>
        <end position="579"/>
    </location>
</feature>
<feature type="compositionally biased region" description="Low complexity" evidence="3">
    <location>
        <begin position="50"/>
        <end position="67"/>
    </location>
</feature>
<feature type="compositionally biased region" description="Basic and acidic residues" evidence="3">
    <location>
        <begin position="68"/>
        <end position="90"/>
    </location>
</feature>
<feature type="compositionally biased region" description="Basic and acidic residues" evidence="3">
    <location>
        <begin position="110"/>
        <end position="125"/>
    </location>
</feature>
<feature type="compositionally biased region" description="Low complexity" evidence="3">
    <location>
        <begin position="129"/>
        <end position="141"/>
    </location>
</feature>
<feature type="compositionally biased region" description="Basic and acidic residues" evidence="3">
    <location>
        <begin position="157"/>
        <end position="167"/>
    </location>
</feature>
<feature type="compositionally biased region" description="Basic and acidic residues" evidence="3">
    <location>
        <begin position="262"/>
        <end position="295"/>
    </location>
</feature>
<feature type="compositionally biased region" description="Low complexity" evidence="3">
    <location>
        <begin position="309"/>
        <end position="318"/>
    </location>
</feature>
<feature type="compositionally biased region" description="Basic and acidic residues" evidence="3">
    <location>
        <begin position="337"/>
        <end position="346"/>
    </location>
</feature>
<feature type="binding site" evidence="2">
    <location>
        <begin position="441"/>
        <end position="448"/>
    </location>
    <ligand>
        <name>GTP</name>
        <dbReference type="ChEBI" id="CHEBI:37565"/>
    </ligand>
</feature>
<feature type="binding site" evidence="2">
    <location>
        <begin position="487"/>
        <end position="491"/>
    </location>
    <ligand>
        <name>GTP</name>
        <dbReference type="ChEBI" id="CHEBI:37565"/>
    </ligand>
</feature>
<feature type="binding site" evidence="2">
    <location>
        <begin position="541"/>
        <end position="544"/>
    </location>
    <ligand>
        <name>GTP</name>
        <dbReference type="ChEBI" id="CHEBI:37565"/>
    </ligand>
</feature>
<sequence length="930" mass="102937">MSKKRLYEIAKELGKESKEVVARAKELGLDVKSHSSSVEEAVAAKIAASFKPAAAPKVEAKPAAPKVSAEKKTEKSEPAKPAVAKEEAKPAEPVAPKTEKVAAKPQSRNFKAEREARAKEQAERRKQNKGNNRDQQQNGNRQKNDGRNGGKQGQSNRDNRRFNDQAKKQQGQQKRRNERRQQEDKRSNQAAPRIDFKARAAALKAEQNAEYARSSEERFKQYQAAKEALAQANKRKEPEEIFEEAAKLAEQAQQVQAVVEVVPEKKEPAVDTRRKKQARPDKNRDDYDHEEDGPRKQQKNRSSQNQVRNQKNSNWNNNKKNKKGNNKNNRNQTPKPVTERKFHELPTEFEYTDGMTVAEIAKRIKREPAEIVKKLFMMGVMATQNQSLDGETIELLMVDYGIEAKQKVEVDNADIERFFVEDGYLNEDELVERPPVVTIMGHVDHGKTTLLDTLRNSRVATGEAGGITQHIGAYQIVENGKKITFLDTPGHAAFTSMRARGASVTDITILVVAADDGVMPQTIEAINHSKAANVPIIVAINKIDKPGANPERVIGELAEHGVMSTAWGGDSEFVEISAKFNQNIEELLETVLLVAEIQELKADPTVRAIGTVIEARLDKGKGAVATLLVQQGTLNVQDPIVVGNTFGRVRAMTNDLGRRVKVAGPSTPVSITGLNEAPMAGDHFAVYEDEKSARAAGEERAKRALMKQRQATQRVSLENLFDTLKAGELKSVNVIIKADVQGSVEALSASLQKIDVEGVKVTIVHSAVGAINESDVTLAEASNAFIVGFNVRPTPQARQQAEADDVEIRLHSIIYKVIEEMEEAMKGMLDPEFEEKVIGEAVIRETFKVSKVGTIGGFMVINGKVARDSKVRVIRDGVVIYDGELASLKHYKDDVKEVTNGREGGLMIDGYNDIKMDDVIEAYVMEEIKR</sequence>
<name>IF2_STRP2</name>
<keyword id="KW-0963">Cytoplasm</keyword>
<keyword id="KW-0342">GTP-binding</keyword>
<keyword id="KW-0396">Initiation factor</keyword>
<keyword id="KW-0547">Nucleotide-binding</keyword>
<keyword id="KW-0648">Protein biosynthesis</keyword>
<keyword id="KW-1185">Reference proteome</keyword>
<dbReference type="EMBL" id="CP000410">
    <property type="protein sequence ID" value="ABJ54884.1"/>
    <property type="molecule type" value="Genomic_DNA"/>
</dbReference>
<dbReference type="RefSeq" id="WP_000039219.1">
    <property type="nucleotide sequence ID" value="NZ_JAMLJR010000001.1"/>
</dbReference>
<dbReference type="SMR" id="Q04LW0"/>
<dbReference type="PaxDb" id="373153-SPD_0482"/>
<dbReference type="KEGG" id="spd:SPD_0482"/>
<dbReference type="eggNOG" id="COG0532">
    <property type="taxonomic scope" value="Bacteria"/>
</dbReference>
<dbReference type="HOGENOM" id="CLU_006301_5_0_9"/>
<dbReference type="BioCyc" id="SPNE373153:G1G6V-531-MONOMER"/>
<dbReference type="Proteomes" id="UP000001452">
    <property type="component" value="Chromosome"/>
</dbReference>
<dbReference type="GO" id="GO:0005829">
    <property type="term" value="C:cytosol"/>
    <property type="evidence" value="ECO:0007669"/>
    <property type="project" value="TreeGrafter"/>
</dbReference>
<dbReference type="GO" id="GO:0005525">
    <property type="term" value="F:GTP binding"/>
    <property type="evidence" value="ECO:0007669"/>
    <property type="project" value="UniProtKB-KW"/>
</dbReference>
<dbReference type="GO" id="GO:0003924">
    <property type="term" value="F:GTPase activity"/>
    <property type="evidence" value="ECO:0007669"/>
    <property type="project" value="UniProtKB-UniRule"/>
</dbReference>
<dbReference type="GO" id="GO:0003743">
    <property type="term" value="F:translation initiation factor activity"/>
    <property type="evidence" value="ECO:0007669"/>
    <property type="project" value="UniProtKB-UniRule"/>
</dbReference>
<dbReference type="CDD" id="cd01887">
    <property type="entry name" value="IF2_eIF5B"/>
    <property type="match status" value="1"/>
</dbReference>
<dbReference type="CDD" id="cd03702">
    <property type="entry name" value="IF2_mtIF2_II"/>
    <property type="match status" value="1"/>
</dbReference>
<dbReference type="CDD" id="cd03692">
    <property type="entry name" value="mtIF2_IVc"/>
    <property type="match status" value="1"/>
</dbReference>
<dbReference type="FunFam" id="1.10.10.2480:FF:000003">
    <property type="entry name" value="Translation initiation factor IF-2"/>
    <property type="match status" value="1"/>
</dbReference>
<dbReference type="FunFam" id="2.40.30.10:FF:000007">
    <property type="entry name" value="Translation initiation factor IF-2"/>
    <property type="match status" value="1"/>
</dbReference>
<dbReference type="FunFam" id="2.40.30.10:FF:000008">
    <property type="entry name" value="Translation initiation factor IF-2"/>
    <property type="match status" value="1"/>
</dbReference>
<dbReference type="FunFam" id="3.40.50.10050:FF:000001">
    <property type="entry name" value="Translation initiation factor IF-2"/>
    <property type="match status" value="1"/>
</dbReference>
<dbReference type="FunFam" id="3.40.50.300:FF:000019">
    <property type="entry name" value="Translation initiation factor IF-2"/>
    <property type="match status" value="1"/>
</dbReference>
<dbReference type="Gene3D" id="1.10.10.2480">
    <property type="match status" value="1"/>
</dbReference>
<dbReference type="Gene3D" id="3.40.50.300">
    <property type="entry name" value="P-loop containing nucleotide triphosphate hydrolases"/>
    <property type="match status" value="1"/>
</dbReference>
<dbReference type="Gene3D" id="2.40.30.10">
    <property type="entry name" value="Translation factors"/>
    <property type="match status" value="2"/>
</dbReference>
<dbReference type="Gene3D" id="3.40.50.10050">
    <property type="entry name" value="Translation initiation factor IF- 2, domain 3"/>
    <property type="match status" value="1"/>
</dbReference>
<dbReference type="HAMAP" id="MF_00100_B">
    <property type="entry name" value="IF_2_B"/>
    <property type="match status" value="1"/>
</dbReference>
<dbReference type="InterPro" id="IPR053905">
    <property type="entry name" value="EF-G-like_DII"/>
</dbReference>
<dbReference type="InterPro" id="IPR044145">
    <property type="entry name" value="IF2_II"/>
</dbReference>
<dbReference type="InterPro" id="IPR006847">
    <property type="entry name" value="IF2_N"/>
</dbReference>
<dbReference type="InterPro" id="IPR027417">
    <property type="entry name" value="P-loop_NTPase"/>
</dbReference>
<dbReference type="InterPro" id="IPR005225">
    <property type="entry name" value="Small_GTP-bd"/>
</dbReference>
<dbReference type="InterPro" id="IPR000795">
    <property type="entry name" value="T_Tr_GTP-bd_dom"/>
</dbReference>
<dbReference type="InterPro" id="IPR000178">
    <property type="entry name" value="TF_IF2_bacterial-like"/>
</dbReference>
<dbReference type="InterPro" id="IPR015760">
    <property type="entry name" value="TIF_IF2"/>
</dbReference>
<dbReference type="InterPro" id="IPR023115">
    <property type="entry name" value="TIF_IF2_dom3"/>
</dbReference>
<dbReference type="InterPro" id="IPR036925">
    <property type="entry name" value="TIF_IF2_dom3_sf"/>
</dbReference>
<dbReference type="InterPro" id="IPR009000">
    <property type="entry name" value="Transl_B-barrel_sf"/>
</dbReference>
<dbReference type="NCBIfam" id="TIGR00487">
    <property type="entry name" value="IF-2"/>
    <property type="match status" value="1"/>
</dbReference>
<dbReference type="NCBIfam" id="TIGR00231">
    <property type="entry name" value="small_GTP"/>
    <property type="match status" value="1"/>
</dbReference>
<dbReference type="PANTHER" id="PTHR43381:SF5">
    <property type="entry name" value="TR-TYPE G DOMAIN-CONTAINING PROTEIN"/>
    <property type="match status" value="1"/>
</dbReference>
<dbReference type="PANTHER" id="PTHR43381">
    <property type="entry name" value="TRANSLATION INITIATION FACTOR IF-2-RELATED"/>
    <property type="match status" value="1"/>
</dbReference>
<dbReference type="Pfam" id="PF22042">
    <property type="entry name" value="EF-G_D2"/>
    <property type="match status" value="1"/>
</dbReference>
<dbReference type="Pfam" id="PF00009">
    <property type="entry name" value="GTP_EFTU"/>
    <property type="match status" value="1"/>
</dbReference>
<dbReference type="Pfam" id="PF11987">
    <property type="entry name" value="IF-2"/>
    <property type="match status" value="1"/>
</dbReference>
<dbReference type="Pfam" id="PF04760">
    <property type="entry name" value="IF2_N"/>
    <property type="match status" value="2"/>
</dbReference>
<dbReference type="SUPFAM" id="SSF52156">
    <property type="entry name" value="Initiation factor IF2/eIF5b, domain 3"/>
    <property type="match status" value="1"/>
</dbReference>
<dbReference type="SUPFAM" id="SSF52540">
    <property type="entry name" value="P-loop containing nucleoside triphosphate hydrolases"/>
    <property type="match status" value="1"/>
</dbReference>
<dbReference type="SUPFAM" id="SSF50447">
    <property type="entry name" value="Translation proteins"/>
    <property type="match status" value="2"/>
</dbReference>
<dbReference type="PROSITE" id="PS51722">
    <property type="entry name" value="G_TR_2"/>
    <property type="match status" value="1"/>
</dbReference>
<dbReference type="PROSITE" id="PS01176">
    <property type="entry name" value="IF2"/>
    <property type="match status" value="1"/>
</dbReference>
<protein>
    <recommendedName>
        <fullName evidence="2">Translation initiation factor IF-2</fullName>
    </recommendedName>
</protein>
<gene>
    <name evidence="2" type="primary">infB</name>
    <name type="ordered locus">SPD_0482</name>
</gene>
<proteinExistence type="inferred from homology"/>
<organism>
    <name type="scientific">Streptococcus pneumoniae serotype 2 (strain D39 / NCTC 7466)</name>
    <dbReference type="NCBI Taxonomy" id="373153"/>
    <lineage>
        <taxon>Bacteria</taxon>
        <taxon>Bacillati</taxon>
        <taxon>Bacillota</taxon>
        <taxon>Bacilli</taxon>
        <taxon>Lactobacillales</taxon>
        <taxon>Streptococcaceae</taxon>
        <taxon>Streptococcus</taxon>
    </lineage>
</organism>
<accession>Q04LW0</accession>
<evidence type="ECO:0000250" key="1"/>
<evidence type="ECO:0000255" key="2">
    <source>
        <dbReference type="HAMAP-Rule" id="MF_00100"/>
    </source>
</evidence>
<evidence type="ECO:0000256" key="3">
    <source>
        <dbReference type="SAM" id="MobiDB-lite"/>
    </source>
</evidence>
<reference key="1">
    <citation type="journal article" date="2007" name="J. Bacteriol.">
        <title>Genome sequence of Avery's virulent serotype 2 strain D39 of Streptococcus pneumoniae and comparison with that of unencapsulated laboratory strain R6.</title>
        <authorList>
            <person name="Lanie J.A."/>
            <person name="Ng W.-L."/>
            <person name="Kazmierczak K.M."/>
            <person name="Andrzejewski T.M."/>
            <person name="Davidsen T.M."/>
            <person name="Wayne K.J."/>
            <person name="Tettelin H."/>
            <person name="Glass J.I."/>
            <person name="Winkler M.E."/>
        </authorList>
    </citation>
    <scope>NUCLEOTIDE SEQUENCE [LARGE SCALE GENOMIC DNA]</scope>
    <source>
        <strain>D39 / NCTC 7466</strain>
    </source>
</reference>
<comment type="function">
    <text evidence="2">One of the essential components for the initiation of protein synthesis. Protects formylmethionyl-tRNA from spontaneous hydrolysis and promotes its binding to the 30S ribosomal subunits. Also involved in the hydrolysis of GTP during the formation of the 70S ribosomal complex.</text>
</comment>
<comment type="subcellular location">
    <subcellularLocation>
        <location evidence="2">Cytoplasm</location>
    </subcellularLocation>
</comment>
<comment type="similarity">
    <text evidence="2">Belongs to the TRAFAC class translation factor GTPase superfamily. Classic translation factor GTPase family. IF-2 subfamily.</text>
</comment>